<reference key="1">
    <citation type="journal article" date="2005" name="Genome Res.">
        <title>Comparative and functional genomic analyses of the pathogenicity of phytopathogen Xanthomonas campestris pv. campestris.</title>
        <authorList>
            <person name="Qian W."/>
            <person name="Jia Y."/>
            <person name="Ren S.-X."/>
            <person name="He Y.-Q."/>
            <person name="Feng J.-X."/>
            <person name="Lu L.-F."/>
            <person name="Sun Q."/>
            <person name="Ying G."/>
            <person name="Tang D.-J."/>
            <person name="Tang H."/>
            <person name="Wu W."/>
            <person name="Hao P."/>
            <person name="Wang L."/>
            <person name="Jiang B.-L."/>
            <person name="Zeng S."/>
            <person name="Gu W.-Y."/>
            <person name="Lu G."/>
            <person name="Rong L."/>
            <person name="Tian Y."/>
            <person name="Yao Z."/>
            <person name="Fu G."/>
            <person name="Chen B."/>
            <person name="Fang R."/>
            <person name="Qiang B."/>
            <person name="Chen Z."/>
            <person name="Zhao G.-P."/>
            <person name="Tang J.-L."/>
            <person name="He C."/>
        </authorList>
    </citation>
    <scope>NUCLEOTIDE SEQUENCE [LARGE SCALE GENOMIC DNA]</scope>
    <source>
        <strain>8004</strain>
    </source>
</reference>
<sequence length="505" mass="56780">MTEQTPTPQLPADENSLIAERRAKLGALRGQGIAYPNDFVRTHFAGDLQAEFAEAETWTAEALEAADRSVKLAGRLMAKRVMGKASFAQIQDESGRVQLFLQGNVLGDAYTAFKGWDVGDIVAVEGGLTRTKTGELSVKATALRLLTKSLRPLPDKWHGLSDVEQRYRQRYVDLIVTPEAREVFIKRSKIIRAIRAWLDARRFLEVETPMMHYIPGGATAKPFTTHHNALDLDLYLRVAPELYLKRLVVGGLERVYEINRNFRNEGVSTRHNPEFTMLELYEAYATYHEIMDLTEQVIRDTAQGVLGTTQVSWDGADIDLAPAFRRWRMDEAVRHHNPEISAADCTDRAALLRHCERLKIKVKPSYGWGKLLLEIFESTVEHTLVQPTFITDHPVEVSPLARASDTEPGYTDRFELFINGKELANGFSELNDPEDQAARFQAQVQAKDGGDDEAMHYDADYIRALEYGMAPTGGLGIGIDRLVMLLTGSTSIRDVLLFPYMRPEA</sequence>
<keyword id="KW-0030">Aminoacyl-tRNA synthetase</keyword>
<keyword id="KW-0067">ATP-binding</keyword>
<keyword id="KW-0963">Cytoplasm</keyword>
<keyword id="KW-0436">Ligase</keyword>
<keyword id="KW-0460">Magnesium</keyword>
<keyword id="KW-0479">Metal-binding</keyword>
<keyword id="KW-0547">Nucleotide-binding</keyword>
<keyword id="KW-0648">Protein biosynthesis</keyword>
<evidence type="ECO:0000255" key="1">
    <source>
        <dbReference type="HAMAP-Rule" id="MF_00252"/>
    </source>
</evidence>
<gene>
    <name evidence="1" type="primary">lysS</name>
    <name type="ordered locus">XC_2336</name>
</gene>
<feature type="chain" id="PRO_1000012964" description="Lysine--tRNA ligase">
    <location>
        <begin position="1"/>
        <end position="505"/>
    </location>
</feature>
<feature type="binding site" evidence="1">
    <location>
        <position position="415"/>
    </location>
    <ligand>
        <name>Mg(2+)</name>
        <dbReference type="ChEBI" id="CHEBI:18420"/>
        <label>1</label>
    </ligand>
</feature>
<feature type="binding site" evidence="1">
    <location>
        <position position="422"/>
    </location>
    <ligand>
        <name>Mg(2+)</name>
        <dbReference type="ChEBI" id="CHEBI:18420"/>
        <label>1</label>
    </ligand>
</feature>
<feature type="binding site" evidence="1">
    <location>
        <position position="422"/>
    </location>
    <ligand>
        <name>Mg(2+)</name>
        <dbReference type="ChEBI" id="CHEBI:18420"/>
        <label>2</label>
    </ligand>
</feature>
<name>SYK_XANC8</name>
<protein>
    <recommendedName>
        <fullName evidence="1">Lysine--tRNA ligase</fullName>
        <ecNumber evidence="1">6.1.1.6</ecNumber>
    </recommendedName>
    <alternativeName>
        <fullName evidence="1">Lysyl-tRNA synthetase</fullName>
        <shortName evidence="1">LysRS</shortName>
    </alternativeName>
</protein>
<comment type="catalytic activity">
    <reaction evidence="1">
        <text>tRNA(Lys) + L-lysine + ATP = L-lysyl-tRNA(Lys) + AMP + diphosphate</text>
        <dbReference type="Rhea" id="RHEA:20792"/>
        <dbReference type="Rhea" id="RHEA-COMP:9696"/>
        <dbReference type="Rhea" id="RHEA-COMP:9697"/>
        <dbReference type="ChEBI" id="CHEBI:30616"/>
        <dbReference type="ChEBI" id="CHEBI:32551"/>
        <dbReference type="ChEBI" id="CHEBI:33019"/>
        <dbReference type="ChEBI" id="CHEBI:78442"/>
        <dbReference type="ChEBI" id="CHEBI:78529"/>
        <dbReference type="ChEBI" id="CHEBI:456215"/>
        <dbReference type="EC" id="6.1.1.6"/>
    </reaction>
</comment>
<comment type="cofactor">
    <cofactor evidence="1">
        <name>Mg(2+)</name>
        <dbReference type="ChEBI" id="CHEBI:18420"/>
    </cofactor>
    <text evidence="1">Binds 3 Mg(2+) ions per subunit.</text>
</comment>
<comment type="subunit">
    <text evidence="1">Homodimer.</text>
</comment>
<comment type="subcellular location">
    <subcellularLocation>
        <location evidence="1">Cytoplasm</location>
    </subcellularLocation>
</comment>
<comment type="similarity">
    <text evidence="1">Belongs to the class-II aminoacyl-tRNA synthetase family.</text>
</comment>
<organism>
    <name type="scientific">Xanthomonas campestris pv. campestris (strain 8004)</name>
    <dbReference type="NCBI Taxonomy" id="314565"/>
    <lineage>
        <taxon>Bacteria</taxon>
        <taxon>Pseudomonadati</taxon>
        <taxon>Pseudomonadota</taxon>
        <taxon>Gammaproteobacteria</taxon>
        <taxon>Lysobacterales</taxon>
        <taxon>Lysobacteraceae</taxon>
        <taxon>Xanthomonas</taxon>
    </lineage>
</organism>
<proteinExistence type="inferred from homology"/>
<accession>Q4UU84</accession>
<dbReference type="EC" id="6.1.1.6" evidence="1"/>
<dbReference type="EMBL" id="CP000050">
    <property type="protein sequence ID" value="AAY49389.1"/>
    <property type="molecule type" value="Genomic_DNA"/>
</dbReference>
<dbReference type="RefSeq" id="WP_011037023.1">
    <property type="nucleotide sequence ID" value="NZ_CP155948.1"/>
</dbReference>
<dbReference type="SMR" id="Q4UU84"/>
<dbReference type="KEGG" id="xcb:XC_2336"/>
<dbReference type="HOGENOM" id="CLU_008255_6_0_6"/>
<dbReference type="Proteomes" id="UP000000420">
    <property type="component" value="Chromosome"/>
</dbReference>
<dbReference type="GO" id="GO:0005829">
    <property type="term" value="C:cytosol"/>
    <property type="evidence" value="ECO:0007669"/>
    <property type="project" value="TreeGrafter"/>
</dbReference>
<dbReference type="GO" id="GO:0005524">
    <property type="term" value="F:ATP binding"/>
    <property type="evidence" value="ECO:0007669"/>
    <property type="project" value="UniProtKB-UniRule"/>
</dbReference>
<dbReference type="GO" id="GO:0004824">
    <property type="term" value="F:lysine-tRNA ligase activity"/>
    <property type="evidence" value="ECO:0007669"/>
    <property type="project" value="UniProtKB-UniRule"/>
</dbReference>
<dbReference type="GO" id="GO:0000287">
    <property type="term" value="F:magnesium ion binding"/>
    <property type="evidence" value="ECO:0007669"/>
    <property type="project" value="UniProtKB-UniRule"/>
</dbReference>
<dbReference type="GO" id="GO:0000049">
    <property type="term" value="F:tRNA binding"/>
    <property type="evidence" value="ECO:0007669"/>
    <property type="project" value="TreeGrafter"/>
</dbReference>
<dbReference type="GO" id="GO:0006430">
    <property type="term" value="P:lysyl-tRNA aminoacylation"/>
    <property type="evidence" value="ECO:0007669"/>
    <property type="project" value="UniProtKB-UniRule"/>
</dbReference>
<dbReference type="CDD" id="cd00775">
    <property type="entry name" value="LysRS_core"/>
    <property type="match status" value="1"/>
</dbReference>
<dbReference type="CDD" id="cd04322">
    <property type="entry name" value="LysRS_N"/>
    <property type="match status" value="1"/>
</dbReference>
<dbReference type="FunFam" id="2.40.50.140:FF:000024">
    <property type="entry name" value="Lysine--tRNA ligase"/>
    <property type="match status" value="1"/>
</dbReference>
<dbReference type="FunFam" id="3.30.930.10:FF:000001">
    <property type="entry name" value="Lysine--tRNA ligase"/>
    <property type="match status" value="1"/>
</dbReference>
<dbReference type="Gene3D" id="3.30.930.10">
    <property type="entry name" value="Bira Bifunctional Protein, Domain 2"/>
    <property type="match status" value="1"/>
</dbReference>
<dbReference type="Gene3D" id="2.40.50.140">
    <property type="entry name" value="Nucleic acid-binding proteins"/>
    <property type="match status" value="1"/>
</dbReference>
<dbReference type="HAMAP" id="MF_00252">
    <property type="entry name" value="Lys_tRNA_synth_class2"/>
    <property type="match status" value="1"/>
</dbReference>
<dbReference type="InterPro" id="IPR004364">
    <property type="entry name" value="Aa-tRNA-synt_II"/>
</dbReference>
<dbReference type="InterPro" id="IPR006195">
    <property type="entry name" value="aa-tRNA-synth_II"/>
</dbReference>
<dbReference type="InterPro" id="IPR045864">
    <property type="entry name" value="aa-tRNA-synth_II/BPL/LPL"/>
</dbReference>
<dbReference type="InterPro" id="IPR002313">
    <property type="entry name" value="Lys-tRNA-ligase_II"/>
</dbReference>
<dbReference type="InterPro" id="IPR044136">
    <property type="entry name" value="Lys-tRNA-ligase_II_N"/>
</dbReference>
<dbReference type="InterPro" id="IPR018149">
    <property type="entry name" value="Lys-tRNA-synth_II_C"/>
</dbReference>
<dbReference type="InterPro" id="IPR012340">
    <property type="entry name" value="NA-bd_OB-fold"/>
</dbReference>
<dbReference type="InterPro" id="IPR004365">
    <property type="entry name" value="NA-bd_OB_tRNA"/>
</dbReference>
<dbReference type="NCBIfam" id="TIGR00499">
    <property type="entry name" value="lysS_bact"/>
    <property type="match status" value="1"/>
</dbReference>
<dbReference type="NCBIfam" id="NF001756">
    <property type="entry name" value="PRK00484.1"/>
    <property type="match status" value="1"/>
</dbReference>
<dbReference type="PANTHER" id="PTHR42918:SF15">
    <property type="entry name" value="LYSINE--TRNA LIGASE, CHLOROPLASTIC_MITOCHONDRIAL"/>
    <property type="match status" value="1"/>
</dbReference>
<dbReference type="PANTHER" id="PTHR42918">
    <property type="entry name" value="LYSYL-TRNA SYNTHETASE"/>
    <property type="match status" value="1"/>
</dbReference>
<dbReference type="Pfam" id="PF00152">
    <property type="entry name" value="tRNA-synt_2"/>
    <property type="match status" value="1"/>
</dbReference>
<dbReference type="Pfam" id="PF01336">
    <property type="entry name" value="tRNA_anti-codon"/>
    <property type="match status" value="1"/>
</dbReference>
<dbReference type="PRINTS" id="PR00982">
    <property type="entry name" value="TRNASYNTHLYS"/>
</dbReference>
<dbReference type="SUPFAM" id="SSF55681">
    <property type="entry name" value="Class II aaRS and biotin synthetases"/>
    <property type="match status" value="1"/>
</dbReference>
<dbReference type="SUPFAM" id="SSF50249">
    <property type="entry name" value="Nucleic acid-binding proteins"/>
    <property type="match status" value="1"/>
</dbReference>
<dbReference type="PROSITE" id="PS50862">
    <property type="entry name" value="AA_TRNA_LIGASE_II"/>
    <property type="match status" value="1"/>
</dbReference>